<proteinExistence type="inferred from homology"/>
<feature type="chain" id="PRO_1000096594" description="Uracil-DNA glycosylase">
    <location>
        <begin position="1"/>
        <end position="226"/>
    </location>
</feature>
<feature type="active site" description="Proton acceptor" evidence="1">
    <location>
        <position position="68"/>
    </location>
</feature>
<comment type="function">
    <text evidence="1">Excises uracil residues from the DNA which can arise as a result of misincorporation of dUMP residues by DNA polymerase or due to deamination of cytosine.</text>
</comment>
<comment type="catalytic activity">
    <reaction evidence="1">
        <text>Hydrolyzes single-stranded DNA or mismatched double-stranded DNA and polynucleotides, releasing free uracil.</text>
        <dbReference type="EC" id="3.2.2.27"/>
    </reaction>
</comment>
<comment type="subcellular location">
    <subcellularLocation>
        <location evidence="1">Cytoplasm</location>
    </subcellularLocation>
</comment>
<comment type="similarity">
    <text evidence="1">Belongs to the uracil-DNA glycosylase (UDG) superfamily. UNG family.</text>
</comment>
<keyword id="KW-0963">Cytoplasm</keyword>
<keyword id="KW-0227">DNA damage</keyword>
<keyword id="KW-0234">DNA repair</keyword>
<keyword id="KW-0378">Hydrolase</keyword>
<keyword id="KW-1185">Reference proteome</keyword>
<protein>
    <recommendedName>
        <fullName evidence="1">Uracil-DNA glycosylase</fullName>
        <shortName evidence="1">UDG</shortName>
        <ecNumber evidence="1">3.2.2.27</ecNumber>
    </recommendedName>
</protein>
<accession>B1MDP0</accession>
<gene>
    <name evidence="1" type="primary">ung</name>
    <name type="ordered locus">MAB_3283c</name>
</gene>
<reference key="1">
    <citation type="journal article" date="2009" name="PLoS ONE">
        <title>Non mycobacterial virulence genes in the genome of the emerging pathogen Mycobacterium abscessus.</title>
        <authorList>
            <person name="Ripoll F."/>
            <person name="Pasek S."/>
            <person name="Schenowitz C."/>
            <person name="Dossat C."/>
            <person name="Barbe V."/>
            <person name="Rottman M."/>
            <person name="Macheras E."/>
            <person name="Heym B."/>
            <person name="Herrmann J.L."/>
            <person name="Daffe M."/>
            <person name="Brosch R."/>
            <person name="Risler J.L."/>
            <person name="Gaillard J.L."/>
        </authorList>
    </citation>
    <scope>NUCLEOTIDE SEQUENCE [LARGE SCALE GENOMIC DNA]</scope>
    <source>
        <strain>ATCC 19977 / DSM 44196 / CCUG 20993 / CIP 104536 / JCM 13569 / NCTC 13031 / TMC 1543 / L948</strain>
    </source>
</reference>
<dbReference type="EC" id="3.2.2.27" evidence="1"/>
<dbReference type="EMBL" id="CU458896">
    <property type="protein sequence ID" value="CAM63359.1"/>
    <property type="molecule type" value="Genomic_DNA"/>
</dbReference>
<dbReference type="RefSeq" id="WP_005056911.1">
    <property type="nucleotide sequence ID" value="NZ_MLCG01000001.1"/>
</dbReference>
<dbReference type="SMR" id="B1MDP0"/>
<dbReference type="GeneID" id="93380215"/>
<dbReference type="KEGG" id="mab:MAB_3283c"/>
<dbReference type="Proteomes" id="UP000007137">
    <property type="component" value="Chromosome"/>
</dbReference>
<dbReference type="GO" id="GO:0005737">
    <property type="term" value="C:cytoplasm"/>
    <property type="evidence" value="ECO:0007669"/>
    <property type="project" value="UniProtKB-SubCell"/>
</dbReference>
<dbReference type="GO" id="GO:0004844">
    <property type="term" value="F:uracil DNA N-glycosylase activity"/>
    <property type="evidence" value="ECO:0007669"/>
    <property type="project" value="UniProtKB-UniRule"/>
</dbReference>
<dbReference type="GO" id="GO:0097510">
    <property type="term" value="P:base-excision repair, AP site formation via deaminated base removal"/>
    <property type="evidence" value="ECO:0007669"/>
    <property type="project" value="TreeGrafter"/>
</dbReference>
<dbReference type="CDD" id="cd10027">
    <property type="entry name" value="UDG-F1-like"/>
    <property type="match status" value="1"/>
</dbReference>
<dbReference type="FunFam" id="3.40.470.10:FF:000006">
    <property type="entry name" value="Uracil-DNA glycosylase"/>
    <property type="match status" value="1"/>
</dbReference>
<dbReference type="Gene3D" id="3.40.470.10">
    <property type="entry name" value="Uracil-DNA glycosylase-like domain"/>
    <property type="match status" value="1"/>
</dbReference>
<dbReference type="HAMAP" id="MF_00148">
    <property type="entry name" value="UDG"/>
    <property type="match status" value="1"/>
</dbReference>
<dbReference type="InterPro" id="IPR002043">
    <property type="entry name" value="UDG_fam1"/>
</dbReference>
<dbReference type="InterPro" id="IPR018085">
    <property type="entry name" value="Ura-DNA_Glyclase_AS"/>
</dbReference>
<dbReference type="InterPro" id="IPR005122">
    <property type="entry name" value="Uracil-DNA_glycosylase-like"/>
</dbReference>
<dbReference type="InterPro" id="IPR036895">
    <property type="entry name" value="Uracil-DNA_glycosylase-like_sf"/>
</dbReference>
<dbReference type="NCBIfam" id="NF003588">
    <property type="entry name" value="PRK05254.1-1"/>
    <property type="match status" value="1"/>
</dbReference>
<dbReference type="NCBIfam" id="NF003592">
    <property type="entry name" value="PRK05254.1-5"/>
    <property type="match status" value="1"/>
</dbReference>
<dbReference type="NCBIfam" id="TIGR00628">
    <property type="entry name" value="ung"/>
    <property type="match status" value="1"/>
</dbReference>
<dbReference type="PANTHER" id="PTHR11264">
    <property type="entry name" value="URACIL-DNA GLYCOSYLASE"/>
    <property type="match status" value="1"/>
</dbReference>
<dbReference type="PANTHER" id="PTHR11264:SF0">
    <property type="entry name" value="URACIL-DNA GLYCOSYLASE"/>
    <property type="match status" value="1"/>
</dbReference>
<dbReference type="Pfam" id="PF03167">
    <property type="entry name" value="UDG"/>
    <property type="match status" value="1"/>
</dbReference>
<dbReference type="SMART" id="SM00986">
    <property type="entry name" value="UDG"/>
    <property type="match status" value="1"/>
</dbReference>
<dbReference type="SMART" id="SM00987">
    <property type="entry name" value="UreE_C"/>
    <property type="match status" value="1"/>
</dbReference>
<dbReference type="SUPFAM" id="SSF52141">
    <property type="entry name" value="Uracil-DNA glycosylase-like"/>
    <property type="match status" value="1"/>
</dbReference>
<dbReference type="PROSITE" id="PS00130">
    <property type="entry name" value="U_DNA_GLYCOSYLASE"/>
    <property type="match status" value="1"/>
</dbReference>
<organism>
    <name type="scientific">Mycobacteroides abscessus (strain ATCC 19977 / DSM 44196 / CCUG 20993 / CIP 104536 / JCM 13569 / NCTC 13031 / TMC 1543 / L948)</name>
    <name type="common">Mycobacterium abscessus</name>
    <dbReference type="NCBI Taxonomy" id="561007"/>
    <lineage>
        <taxon>Bacteria</taxon>
        <taxon>Bacillati</taxon>
        <taxon>Actinomycetota</taxon>
        <taxon>Actinomycetes</taxon>
        <taxon>Mycobacteriales</taxon>
        <taxon>Mycobacteriaceae</taxon>
        <taxon>Mycobacteroides</taxon>
        <taxon>Mycobacteroides abscessus</taxon>
    </lineage>
</organism>
<name>UNG_MYCA9</name>
<evidence type="ECO:0000255" key="1">
    <source>
        <dbReference type="HAMAP-Rule" id="MF_00148"/>
    </source>
</evidence>
<sequence length="226" mass="24182">MTARPLAELVDPGWADALGPVADQVTKMGEFLREENSSGRGYLPSGANVLRAFTYPLADVRVLIVGQDPYPTPGHAMGLSFSVAADVRPVPRSLGNIFDEYQSDLGLPKPANGDLTPWSEQGVMLLNRVLTVRPGNPASHRGKGWEIVTECAIRALVARDAPLVAILWGRDAATLKPMLGPSVPTIESVHPSPLSASRGFFGSKPFSRANELLVGLGAQPVDWRLP</sequence>